<gene>
    <name evidence="1" type="primary">rsmG</name>
    <name type="ordered locus">Mvan_6073</name>
</gene>
<feature type="chain" id="PRO_0000335381" description="Ribosomal RNA small subunit methyltransferase G">
    <location>
        <begin position="1"/>
        <end position="227"/>
    </location>
</feature>
<feature type="binding site" evidence="1">
    <location>
        <position position="74"/>
    </location>
    <ligand>
        <name>S-adenosyl-L-methionine</name>
        <dbReference type="ChEBI" id="CHEBI:59789"/>
    </ligand>
</feature>
<feature type="binding site" evidence="1">
    <location>
        <position position="79"/>
    </location>
    <ligand>
        <name>S-adenosyl-L-methionine</name>
        <dbReference type="ChEBI" id="CHEBI:59789"/>
    </ligand>
</feature>
<feature type="binding site" evidence="1">
    <location>
        <begin position="124"/>
        <end position="125"/>
    </location>
    <ligand>
        <name>S-adenosyl-L-methionine</name>
        <dbReference type="ChEBI" id="CHEBI:59789"/>
    </ligand>
</feature>
<feature type="binding site" evidence="1">
    <location>
        <position position="142"/>
    </location>
    <ligand>
        <name>S-adenosyl-L-methionine</name>
        <dbReference type="ChEBI" id="CHEBI:59789"/>
    </ligand>
</feature>
<keyword id="KW-0963">Cytoplasm</keyword>
<keyword id="KW-0489">Methyltransferase</keyword>
<keyword id="KW-0698">rRNA processing</keyword>
<keyword id="KW-0949">S-adenosyl-L-methionine</keyword>
<keyword id="KW-0808">Transferase</keyword>
<dbReference type="EC" id="2.1.1.-" evidence="1"/>
<dbReference type="EMBL" id="CP000511">
    <property type="protein sequence ID" value="ABM16825.1"/>
    <property type="molecule type" value="Genomic_DNA"/>
</dbReference>
<dbReference type="RefSeq" id="WP_011783169.1">
    <property type="nucleotide sequence ID" value="NZ_JACKSD010000290.1"/>
</dbReference>
<dbReference type="SMR" id="A1TI25"/>
<dbReference type="STRING" id="350058.Mvan_6073"/>
<dbReference type="KEGG" id="mva:Mvan_6073"/>
<dbReference type="eggNOG" id="COG0357">
    <property type="taxonomic scope" value="Bacteria"/>
</dbReference>
<dbReference type="HOGENOM" id="CLU_065341_5_0_11"/>
<dbReference type="Proteomes" id="UP000009159">
    <property type="component" value="Chromosome"/>
</dbReference>
<dbReference type="GO" id="GO:0005829">
    <property type="term" value="C:cytosol"/>
    <property type="evidence" value="ECO:0007669"/>
    <property type="project" value="TreeGrafter"/>
</dbReference>
<dbReference type="GO" id="GO:0070043">
    <property type="term" value="F:rRNA (guanine-N7-)-methyltransferase activity"/>
    <property type="evidence" value="ECO:0007669"/>
    <property type="project" value="UniProtKB-UniRule"/>
</dbReference>
<dbReference type="CDD" id="cd02440">
    <property type="entry name" value="AdoMet_MTases"/>
    <property type="match status" value="1"/>
</dbReference>
<dbReference type="Gene3D" id="3.40.50.150">
    <property type="entry name" value="Vaccinia Virus protein VP39"/>
    <property type="match status" value="1"/>
</dbReference>
<dbReference type="HAMAP" id="MF_00074">
    <property type="entry name" value="16SrRNA_methyltr_G"/>
    <property type="match status" value="1"/>
</dbReference>
<dbReference type="InterPro" id="IPR003682">
    <property type="entry name" value="rRNA_ssu_MeTfrase_G"/>
</dbReference>
<dbReference type="InterPro" id="IPR029063">
    <property type="entry name" value="SAM-dependent_MTases_sf"/>
</dbReference>
<dbReference type="NCBIfam" id="TIGR00138">
    <property type="entry name" value="rsmG_gidB"/>
    <property type="match status" value="1"/>
</dbReference>
<dbReference type="PANTHER" id="PTHR31760">
    <property type="entry name" value="S-ADENOSYL-L-METHIONINE-DEPENDENT METHYLTRANSFERASES SUPERFAMILY PROTEIN"/>
    <property type="match status" value="1"/>
</dbReference>
<dbReference type="PANTHER" id="PTHR31760:SF0">
    <property type="entry name" value="S-ADENOSYL-L-METHIONINE-DEPENDENT METHYLTRANSFERASES SUPERFAMILY PROTEIN"/>
    <property type="match status" value="1"/>
</dbReference>
<dbReference type="Pfam" id="PF02527">
    <property type="entry name" value="GidB"/>
    <property type="match status" value="1"/>
</dbReference>
<dbReference type="PIRSF" id="PIRSF003078">
    <property type="entry name" value="GidB"/>
    <property type="match status" value="1"/>
</dbReference>
<dbReference type="SUPFAM" id="SSF53335">
    <property type="entry name" value="S-adenosyl-L-methionine-dependent methyltransferases"/>
    <property type="match status" value="1"/>
</dbReference>
<reference key="1">
    <citation type="submission" date="2006-12" db="EMBL/GenBank/DDBJ databases">
        <title>Complete sequence of Mycobacterium vanbaalenii PYR-1.</title>
        <authorList>
            <consortium name="US DOE Joint Genome Institute"/>
            <person name="Copeland A."/>
            <person name="Lucas S."/>
            <person name="Lapidus A."/>
            <person name="Barry K."/>
            <person name="Detter J.C."/>
            <person name="Glavina del Rio T."/>
            <person name="Hammon N."/>
            <person name="Israni S."/>
            <person name="Dalin E."/>
            <person name="Tice H."/>
            <person name="Pitluck S."/>
            <person name="Singan V."/>
            <person name="Schmutz J."/>
            <person name="Larimer F."/>
            <person name="Land M."/>
            <person name="Hauser L."/>
            <person name="Kyrpides N."/>
            <person name="Anderson I.J."/>
            <person name="Miller C."/>
            <person name="Richardson P."/>
        </authorList>
    </citation>
    <scope>NUCLEOTIDE SEQUENCE [LARGE SCALE GENOMIC DNA]</scope>
    <source>
        <strain>DSM 7251 / JCM 13017 / BCRC 16820 / KCTC 9966 / NRRL B-24157 / PYR-1</strain>
    </source>
</reference>
<accession>A1TI25</accession>
<comment type="function">
    <text evidence="1">Specifically methylates the N7 position of guanine in position 518 of 16S rRNA.</text>
</comment>
<comment type="subcellular location">
    <subcellularLocation>
        <location evidence="1">Cytoplasm</location>
    </subcellularLocation>
</comment>
<comment type="similarity">
    <text evidence="1">Belongs to the methyltransferase superfamily. RNA methyltransferase RsmG family.</text>
</comment>
<proteinExistence type="inferred from homology"/>
<sequence length="227" mass="24598">MKHAEVPPPPEAAEAVFGPALEKAHLYARILAGAGVERGLLGPREVERLWDRHILNCAVVGELLQPGERVADIGSGAGLPGIPLALARPDVHVILIEPLLRRSEFLRETIEEIGIDCDVVRGRAEDRSVREEVGTTDVVVSRAVASLDKLTKWSSPLLRVGGRMLAIKGERADDEVQQHRRAMAALGVSEVKVERCGGQYVEPPATVVVGFQGVAKVSQSRSGRRHR</sequence>
<protein>
    <recommendedName>
        <fullName evidence="1">Ribosomal RNA small subunit methyltransferase G</fullName>
        <ecNumber evidence="1">2.1.1.-</ecNumber>
    </recommendedName>
    <alternativeName>
        <fullName evidence="1">16S rRNA 7-methylguanosine methyltransferase</fullName>
        <shortName evidence="1">16S rRNA m7G methyltransferase</shortName>
    </alternativeName>
</protein>
<organism>
    <name type="scientific">Mycolicibacterium vanbaalenii (strain DSM 7251 / JCM 13017 / BCRC 16820 / KCTC 9966 / NRRL B-24157 / PYR-1)</name>
    <name type="common">Mycobacterium vanbaalenii</name>
    <dbReference type="NCBI Taxonomy" id="350058"/>
    <lineage>
        <taxon>Bacteria</taxon>
        <taxon>Bacillati</taxon>
        <taxon>Actinomycetota</taxon>
        <taxon>Actinomycetes</taxon>
        <taxon>Mycobacteriales</taxon>
        <taxon>Mycobacteriaceae</taxon>
        <taxon>Mycolicibacterium</taxon>
    </lineage>
</organism>
<name>RSMG_MYCVP</name>
<evidence type="ECO:0000255" key="1">
    <source>
        <dbReference type="HAMAP-Rule" id="MF_00074"/>
    </source>
</evidence>